<proteinExistence type="inferred from homology"/>
<name>RL34_BURP0</name>
<protein>
    <recommendedName>
        <fullName evidence="1">Large ribosomal subunit protein bL34</fullName>
    </recommendedName>
    <alternativeName>
        <fullName evidence="2">50S ribosomal protein L34</fullName>
    </alternativeName>
</protein>
<keyword id="KW-0687">Ribonucleoprotein</keyword>
<keyword id="KW-0689">Ribosomal protein</keyword>
<accession>A3NPW8</accession>
<reference key="1">
    <citation type="journal article" date="2010" name="Genome Biol. Evol.">
        <title>Continuing evolution of Burkholderia mallei through genome reduction and large-scale rearrangements.</title>
        <authorList>
            <person name="Losada L."/>
            <person name="Ronning C.M."/>
            <person name="DeShazer D."/>
            <person name="Woods D."/>
            <person name="Fedorova N."/>
            <person name="Kim H.S."/>
            <person name="Shabalina S.A."/>
            <person name="Pearson T.R."/>
            <person name="Brinkac L."/>
            <person name="Tan P."/>
            <person name="Nandi T."/>
            <person name="Crabtree J."/>
            <person name="Badger J."/>
            <person name="Beckstrom-Sternberg S."/>
            <person name="Saqib M."/>
            <person name="Schutzer S.E."/>
            <person name="Keim P."/>
            <person name="Nierman W.C."/>
        </authorList>
    </citation>
    <scope>NUCLEOTIDE SEQUENCE [LARGE SCALE GENOMIC DNA]</scope>
    <source>
        <strain>1106a</strain>
    </source>
</reference>
<organism>
    <name type="scientific">Burkholderia pseudomallei (strain 1106a)</name>
    <dbReference type="NCBI Taxonomy" id="357348"/>
    <lineage>
        <taxon>Bacteria</taxon>
        <taxon>Pseudomonadati</taxon>
        <taxon>Pseudomonadota</taxon>
        <taxon>Betaproteobacteria</taxon>
        <taxon>Burkholderiales</taxon>
        <taxon>Burkholderiaceae</taxon>
        <taxon>Burkholderia</taxon>
        <taxon>pseudomallei group</taxon>
    </lineage>
</organism>
<comment type="similarity">
    <text evidence="1">Belongs to the bacterial ribosomal protein bL34 family.</text>
</comment>
<dbReference type="EMBL" id="CP000572">
    <property type="protein sequence ID" value="ABN91822.1"/>
    <property type="molecule type" value="Genomic_DNA"/>
</dbReference>
<dbReference type="RefSeq" id="WP_004198824.1">
    <property type="nucleotide sequence ID" value="NC_009076.1"/>
</dbReference>
<dbReference type="SMR" id="A3NPW8"/>
<dbReference type="GeneID" id="98107775"/>
<dbReference type="KEGG" id="bpl:BURPS1106A_0104"/>
<dbReference type="HOGENOM" id="CLU_129938_2_0_4"/>
<dbReference type="Proteomes" id="UP000006738">
    <property type="component" value="Chromosome I"/>
</dbReference>
<dbReference type="GO" id="GO:1990904">
    <property type="term" value="C:ribonucleoprotein complex"/>
    <property type="evidence" value="ECO:0007669"/>
    <property type="project" value="UniProtKB-KW"/>
</dbReference>
<dbReference type="GO" id="GO:0005840">
    <property type="term" value="C:ribosome"/>
    <property type="evidence" value="ECO:0007669"/>
    <property type="project" value="UniProtKB-KW"/>
</dbReference>
<dbReference type="GO" id="GO:0003735">
    <property type="term" value="F:structural constituent of ribosome"/>
    <property type="evidence" value="ECO:0007669"/>
    <property type="project" value="InterPro"/>
</dbReference>
<dbReference type="GO" id="GO:0006412">
    <property type="term" value="P:translation"/>
    <property type="evidence" value="ECO:0007669"/>
    <property type="project" value="UniProtKB-UniRule"/>
</dbReference>
<dbReference type="FunFam" id="1.10.287.3980:FF:000001">
    <property type="entry name" value="Mitochondrial ribosomal protein L34"/>
    <property type="match status" value="1"/>
</dbReference>
<dbReference type="Gene3D" id="1.10.287.3980">
    <property type="match status" value="1"/>
</dbReference>
<dbReference type="HAMAP" id="MF_00391">
    <property type="entry name" value="Ribosomal_bL34"/>
    <property type="match status" value="1"/>
</dbReference>
<dbReference type="InterPro" id="IPR000271">
    <property type="entry name" value="Ribosomal_bL34"/>
</dbReference>
<dbReference type="InterPro" id="IPR020939">
    <property type="entry name" value="Ribosomal_bL34_CS"/>
</dbReference>
<dbReference type="NCBIfam" id="TIGR01030">
    <property type="entry name" value="rpmH_bact"/>
    <property type="match status" value="1"/>
</dbReference>
<dbReference type="PANTHER" id="PTHR14503:SF4">
    <property type="entry name" value="LARGE RIBOSOMAL SUBUNIT PROTEIN BL34M"/>
    <property type="match status" value="1"/>
</dbReference>
<dbReference type="PANTHER" id="PTHR14503">
    <property type="entry name" value="MITOCHONDRIAL RIBOSOMAL PROTEIN 34 FAMILY MEMBER"/>
    <property type="match status" value="1"/>
</dbReference>
<dbReference type="Pfam" id="PF00468">
    <property type="entry name" value="Ribosomal_L34"/>
    <property type="match status" value="1"/>
</dbReference>
<dbReference type="PROSITE" id="PS00784">
    <property type="entry name" value="RIBOSOMAL_L34"/>
    <property type="match status" value="1"/>
</dbReference>
<sequence>MKRTYQPSVTRRKRTHGFRVRMKTAGGRKVINARRAKGRKRLAI</sequence>
<feature type="chain" id="PRO_1000013299" description="Large ribosomal subunit protein bL34">
    <location>
        <begin position="1"/>
        <end position="44"/>
    </location>
</feature>
<evidence type="ECO:0000255" key="1">
    <source>
        <dbReference type="HAMAP-Rule" id="MF_00391"/>
    </source>
</evidence>
<evidence type="ECO:0000305" key="2"/>
<gene>
    <name evidence="1" type="primary">rpmH</name>
    <name type="ordered locus">BURPS1106A_0104</name>
</gene>